<comment type="function">
    <text evidence="1">The RecF protein is involved in DNA metabolism; it is required for DNA replication and normal SOS inducibility. RecF binds preferentially to single-stranded, linear DNA. It also seems to bind ATP.</text>
</comment>
<comment type="subcellular location">
    <subcellularLocation>
        <location evidence="1">Cytoplasm</location>
    </subcellularLocation>
</comment>
<comment type="similarity">
    <text evidence="1">Belongs to the RecF family.</text>
</comment>
<feature type="chain" id="PRO_1000193343" description="DNA replication and repair protein RecF">
    <location>
        <begin position="1"/>
        <end position="359"/>
    </location>
</feature>
<feature type="binding site" evidence="1">
    <location>
        <begin position="30"/>
        <end position="37"/>
    </location>
    <ligand>
        <name>ATP</name>
        <dbReference type="ChEBI" id="CHEBI:30616"/>
    </ligand>
</feature>
<dbReference type="EMBL" id="FM954972">
    <property type="protein sequence ID" value="CAV17069.1"/>
    <property type="molecule type" value="Genomic_DNA"/>
</dbReference>
<dbReference type="SMR" id="B7VGI6"/>
<dbReference type="STRING" id="575788.VS_0012"/>
<dbReference type="KEGG" id="vsp:VS_0012"/>
<dbReference type="PATRIC" id="fig|575788.5.peg.1428"/>
<dbReference type="eggNOG" id="COG1195">
    <property type="taxonomic scope" value="Bacteria"/>
</dbReference>
<dbReference type="HOGENOM" id="CLU_040267_0_0_6"/>
<dbReference type="Proteomes" id="UP000009100">
    <property type="component" value="Chromosome 1"/>
</dbReference>
<dbReference type="GO" id="GO:0005737">
    <property type="term" value="C:cytoplasm"/>
    <property type="evidence" value="ECO:0007669"/>
    <property type="project" value="UniProtKB-SubCell"/>
</dbReference>
<dbReference type="GO" id="GO:0005524">
    <property type="term" value="F:ATP binding"/>
    <property type="evidence" value="ECO:0007669"/>
    <property type="project" value="UniProtKB-UniRule"/>
</dbReference>
<dbReference type="GO" id="GO:0003697">
    <property type="term" value="F:single-stranded DNA binding"/>
    <property type="evidence" value="ECO:0007669"/>
    <property type="project" value="UniProtKB-UniRule"/>
</dbReference>
<dbReference type="GO" id="GO:0006260">
    <property type="term" value="P:DNA replication"/>
    <property type="evidence" value="ECO:0007669"/>
    <property type="project" value="UniProtKB-UniRule"/>
</dbReference>
<dbReference type="GO" id="GO:0000731">
    <property type="term" value="P:DNA synthesis involved in DNA repair"/>
    <property type="evidence" value="ECO:0007669"/>
    <property type="project" value="TreeGrafter"/>
</dbReference>
<dbReference type="GO" id="GO:0006302">
    <property type="term" value="P:double-strand break repair"/>
    <property type="evidence" value="ECO:0007669"/>
    <property type="project" value="TreeGrafter"/>
</dbReference>
<dbReference type="GO" id="GO:0009432">
    <property type="term" value="P:SOS response"/>
    <property type="evidence" value="ECO:0007669"/>
    <property type="project" value="UniProtKB-UniRule"/>
</dbReference>
<dbReference type="FunFam" id="1.20.1050.90:FF:000001">
    <property type="entry name" value="DNA replication and repair protein RecF"/>
    <property type="match status" value="1"/>
</dbReference>
<dbReference type="Gene3D" id="3.40.50.300">
    <property type="entry name" value="P-loop containing nucleotide triphosphate hydrolases"/>
    <property type="match status" value="1"/>
</dbReference>
<dbReference type="Gene3D" id="1.20.1050.90">
    <property type="entry name" value="RecF/RecN/SMC, N-terminal domain"/>
    <property type="match status" value="1"/>
</dbReference>
<dbReference type="HAMAP" id="MF_00365">
    <property type="entry name" value="RecF"/>
    <property type="match status" value="1"/>
</dbReference>
<dbReference type="InterPro" id="IPR001238">
    <property type="entry name" value="DNA-binding_RecF"/>
</dbReference>
<dbReference type="InterPro" id="IPR018078">
    <property type="entry name" value="DNA-binding_RecF_CS"/>
</dbReference>
<dbReference type="InterPro" id="IPR027417">
    <property type="entry name" value="P-loop_NTPase"/>
</dbReference>
<dbReference type="InterPro" id="IPR003395">
    <property type="entry name" value="RecF/RecN/SMC_N"/>
</dbReference>
<dbReference type="InterPro" id="IPR042174">
    <property type="entry name" value="RecF_2"/>
</dbReference>
<dbReference type="NCBIfam" id="TIGR00611">
    <property type="entry name" value="recf"/>
    <property type="match status" value="1"/>
</dbReference>
<dbReference type="PANTHER" id="PTHR32182">
    <property type="entry name" value="DNA REPLICATION AND REPAIR PROTEIN RECF"/>
    <property type="match status" value="1"/>
</dbReference>
<dbReference type="PANTHER" id="PTHR32182:SF0">
    <property type="entry name" value="DNA REPLICATION AND REPAIR PROTEIN RECF"/>
    <property type="match status" value="1"/>
</dbReference>
<dbReference type="Pfam" id="PF02463">
    <property type="entry name" value="SMC_N"/>
    <property type="match status" value="1"/>
</dbReference>
<dbReference type="SUPFAM" id="SSF52540">
    <property type="entry name" value="P-loop containing nucleoside triphosphate hydrolases"/>
    <property type="match status" value="1"/>
</dbReference>
<dbReference type="PROSITE" id="PS00617">
    <property type="entry name" value="RECF_1"/>
    <property type="match status" value="1"/>
</dbReference>
<dbReference type="PROSITE" id="PS00618">
    <property type="entry name" value="RECF_2"/>
    <property type="match status" value="1"/>
</dbReference>
<name>RECF_VIBA3</name>
<accession>B7VGI6</accession>
<protein>
    <recommendedName>
        <fullName evidence="1">DNA replication and repair protein RecF</fullName>
    </recommendedName>
</protein>
<organism>
    <name type="scientific">Vibrio atlanticus (strain LGP32)</name>
    <name type="common">Vibrio splendidus (strain Mel32)</name>
    <dbReference type="NCBI Taxonomy" id="575788"/>
    <lineage>
        <taxon>Bacteria</taxon>
        <taxon>Pseudomonadati</taxon>
        <taxon>Pseudomonadota</taxon>
        <taxon>Gammaproteobacteria</taxon>
        <taxon>Vibrionales</taxon>
        <taxon>Vibrionaceae</taxon>
        <taxon>Vibrio</taxon>
    </lineage>
</organism>
<keyword id="KW-0067">ATP-binding</keyword>
<keyword id="KW-0963">Cytoplasm</keyword>
<keyword id="KW-0227">DNA damage</keyword>
<keyword id="KW-0234">DNA repair</keyword>
<keyword id="KW-0235">DNA replication</keyword>
<keyword id="KW-0238">DNA-binding</keyword>
<keyword id="KW-0547">Nucleotide-binding</keyword>
<keyword id="KW-0742">SOS response</keyword>
<evidence type="ECO:0000255" key="1">
    <source>
        <dbReference type="HAMAP-Rule" id="MF_00365"/>
    </source>
</evidence>
<reference key="1">
    <citation type="submission" date="2009-02" db="EMBL/GenBank/DDBJ databases">
        <title>Vibrio splendidus str. LGP32 complete genome.</title>
        <authorList>
            <person name="Mazel D."/>
            <person name="Le Roux F."/>
        </authorList>
    </citation>
    <scope>NUCLEOTIDE SEQUENCE [LARGE SCALE GENOMIC DNA]</scope>
    <source>
        <strain>LGP32</strain>
    </source>
</reference>
<proteinExistence type="inferred from homology"/>
<sequence length="359" mass="40767">MPLSRLIVKQFRNIEACDIQPSSGFNFLIGANGSGKTSVLEAVYLLGHGRSFKSSLSGRIIQNECSELFVHGRFMTSDQFELPIGINKQRDGTTEVKISGQTGQKLAQLAQVLPLQLIHPEGFDLLTDGPKHRRAFIDWGVFHSESGFYDAWGRVKRLNKQRNALLKTATHYRELSYWDQELARLAESISQWRATYVEQLKEVAEEICATFLPEFEIKINYYRGWDKDTPYAEILEKNFERDQQLGYTFSGPNKADLKIKVNGTPVEDVLSRGQLKLMVCALRVAQGQHLTQMTGKQCIYLIDDFASELDSQRRARLAECLKATQAQVFVSSITADQIADMHDENSRMFHVEHGKIEQG</sequence>
<gene>
    <name evidence="1" type="primary">recF</name>
    <name type="ordered locus">VS_0012</name>
</gene>